<proteinExistence type="evidence at protein level"/>
<dbReference type="EC" id="1.1.1.233"/>
<dbReference type="EMBL" id="D90316">
    <property type="protein sequence ID" value="BAA14346.1"/>
    <property type="molecule type" value="Genomic_DNA"/>
</dbReference>
<dbReference type="PIR" id="A43744">
    <property type="entry name" value="A43744"/>
</dbReference>
<dbReference type="PDB" id="4CR6">
    <property type="method" value="X-ray"/>
    <property type="resolution" value="1.90 A"/>
    <property type="chains" value="A/B/C/D=1-271"/>
</dbReference>
<dbReference type="PDB" id="4CR7">
    <property type="method" value="X-ray"/>
    <property type="resolution" value="2.15 A"/>
    <property type="chains" value="A/B/C/D/E/F/G/H/I/J/K/L/M/N/O/P=1-271"/>
</dbReference>
<dbReference type="PDB" id="4CR8">
    <property type="method" value="X-ray"/>
    <property type="resolution" value="2.20 A"/>
    <property type="chains" value="A/B/C/D/E/F/G/H=1-271"/>
</dbReference>
<dbReference type="PDBsum" id="4CR6"/>
<dbReference type="PDBsum" id="4CR7"/>
<dbReference type="PDBsum" id="4CR8"/>
<dbReference type="SMR" id="P22441"/>
<dbReference type="BRENDA" id="1.1.1.233">
    <property type="organism ID" value="2302"/>
</dbReference>
<dbReference type="EvolutionaryTrace" id="P22441"/>
<dbReference type="GO" id="GO:0050123">
    <property type="term" value="F:N-acylmannosamine 1-dehydrogenase activity"/>
    <property type="evidence" value="ECO:0007669"/>
    <property type="project" value="UniProtKB-EC"/>
</dbReference>
<dbReference type="CDD" id="cd05233">
    <property type="entry name" value="SDR_c"/>
    <property type="match status" value="1"/>
</dbReference>
<dbReference type="FunFam" id="3.40.50.720:FF:000084">
    <property type="entry name" value="Short-chain dehydrogenase reductase"/>
    <property type="match status" value="1"/>
</dbReference>
<dbReference type="Gene3D" id="3.40.50.720">
    <property type="entry name" value="NAD(P)-binding Rossmann-like Domain"/>
    <property type="match status" value="1"/>
</dbReference>
<dbReference type="InterPro" id="IPR036291">
    <property type="entry name" value="NAD(P)-bd_dom_sf"/>
</dbReference>
<dbReference type="InterPro" id="IPR020904">
    <property type="entry name" value="Sc_DH/Rdtase_CS"/>
</dbReference>
<dbReference type="InterPro" id="IPR002347">
    <property type="entry name" value="SDR_fam"/>
</dbReference>
<dbReference type="PANTHER" id="PTHR24321">
    <property type="entry name" value="DEHYDROGENASES, SHORT CHAIN"/>
    <property type="match status" value="1"/>
</dbReference>
<dbReference type="PANTHER" id="PTHR24321:SF8">
    <property type="entry name" value="ESTRADIOL 17-BETA-DEHYDROGENASE 8-RELATED"/>
    <property type="match status" value="1"/>
</dbReference>
<dbReference type="Pfam" id="PF13561">
    <property type="entry name" value="adh_short_C2"/>
    <property type="match status" value="1"/>
</dbReference>
<dbReference type="PRINTS" id="PR00081">
    <property type="entry name" value="GDHRDH"/>
</dbReference>
<dbReference type="PRINTS" id="PR00080">
    <property type="entry name" value="SDRFAMILY"/>
</dbReference>
<dbReference type="SUPFAM" id="SSF51735">
    <property type="entry name" value="NAD(P)-binding Rossmann-fold domains"/>
    <property type="match status" value="1"/>
</dbReference>
<dbReference type="PROSITE" id="PS00061">
    <property type="entry name" value="ADH_SHORT"/>
    <property type="match status" value="1"/>
</dbReference>
<evidence type="ECO:0000250" key="1"/>
<evidence type="ECO:0000255" key="2">
    <source>
        <dbReference type="PROSITE-ProRule" id="PRU10001"/>
    </source>
</evidence>
<evidence type="ECO:0000305" key="3"/>
<evidence type="ECO:0007829" key="4">
    <source>
        <dbReference type="PDB" id="4CR6"/>
    </source>
</evidence>
<evidence type="ECO:0007829" key="5">
    <source>
        <dbReference type="PDB" id="4CR7"/>
    </source>
</evidence>
<protein>
    <recommendedName>
        <fullName>N-acylmannosamine 1-dehydrogenase</fullName>
        <shortName>NAM-DH</shortName>
        <ecNumber>1.1.1.233</ecNumber>
    </recommendedName>
</protein>
<accession>P22441</accession>
<comment type="function">
    <text>Acts on acetyl-D-mannosamine and glycolyl-D-mannosamine.</text>
</comment>
<comment type="catalytic activity">
    <reaction>
        <text>an N-acyl-D-mannosamine + NAD(+) = an N-acyl-D-mannosaminolactone + NADH + H(+)</text>
        <dbReference type="Rhea" id="RHEA:11540"/>
        <dbReference type="ChEBI" id="CHEBI:15378"/>
        <dbReference type="ChEBI" id="CHEBI:16062"/>
        <dbReference type="ChEBI" id="CHEBI:17970"/>
        <dbReference type="ChEBI" id="CHEBI:57540"/>
        <dbReference type="ChEBI" id="CHEBI:57945"/>
        <dbReference type="EC" id="1.1.1.233"/>
    </reaction>
</comment>
<comment type="miscellaneous">
    <text>NAM-DH may be applicable to the quantitative determination of sialic acid in serum.</text>
</comment>
<comment type="similarity">
    <text evidence="3">Belongs to the short-chain dehydrogenases/reductases (SDR) family.</text>
</comment>
<name>DHMA_FLAS1</name>
<feature type="initiator methionine" description="Removed">
    <location>
        <position position="1"/>
    </location>
</feature>
<feature type="chain" id="PRO_0000054635" description="N-acylmannosamine 1-dehydrogenase">
    <location>
        <begin position="2"/>
        <end position="271"/>
    </location>
</feature>
<feature type="active site" description="Proton acceptor" evidence="2">
    <location>
        <position position="166"/>
    </location>
</feature>
<feature type="binding site" evidence="1">
    <location>
        <begin position="20"/>
        <end position="44"/>
    </location>
    <ligand>
        <name>NAD(+)</name>
        <dbReference type="ChEBI" id="CHEBI:57540"/>
    </ligand>
</feature>
<feature type="binding site" evidence="1">
    <location>
        <position position="153"/>
    </location>
    <ligand>
        <name>substrate</name>
    </ligand>
</feature>
<feature type="turn" evidence="4">
    <location>
        <begin position="12"/>
        <end position="15"/>
    </location>
</feature>
<feature type="strand" evidence="4">
    <location>
        <begin position="17"/>
        <end position="22"/>
    </location>
</feature>
<feature type="helix" evidence="4">
    <location>
        <begin position="26"/>
        <end position="37"/>
    </location>
</feature>
<feature type="strand" evidence="4">
    <location>
        <begin position="41"/>
        <end position="46"/>
    </location>
</feature>
<feature type="helix" evidence="4">
    <location>
        <begin position="48"/>
        <end position="52"/>
    </location>
</feature>
<feature type="strand" evidence="4">
    <location>
        <begin position="57"/>
        <end position="59"/>
    </location>
</feature>
<feature type="strand" evidence="4">
    <location>
        <begin position="62"/>
        <end position="65"/>
    </location>
</feature>
<feature type="helix" evidence="4">
    <location>
        <begin position="72"/>
        <end position="85"/>
    </location>
</feature>
<feature type="strand" evidence="4">
    <location>
        <begin position="90"/>
        <end position="93"/>
    </location>
</feature>
<feature type="helix" evidence="4">
    <location>
        <begin position="104"/>
        <end position="106"/>
    </location>
</feature>
<feature type="helix" evidence="4">
    <location>
        <begin position="109"/>
        <end position="119"/>
    </location>
</feature>
<feature type="helix" evidence="4">
    <location>
        <begin position="121"/>
        <end position="136"/>
    </location>
</feature>
<feature type="turn" evidence="5">
    <location>
        <begin position="137"/>
        <end position="142"/>
    </location>
</feature>
<feature type="strand" evidence="4">
    <location>
        <begin position="146"/>
        <end position="151"/>
    </location>
</feature>
<feature type="helix" evidence="4">
    <location>
        <begin position="154"/>
        <end position="156"/>
    </location>
</feature>
<feature type="helix" evidence="4">
    <location>
        <begin position="164"/>
        <end position="184"/>
    </location>
</feature>
<feature type="helix" evidence="4">
    <location>
        <begin position="185"/>
        <end position="187"/>
    </location>
</feature>
<feature type="strand" evidence="4">
    <location>
        <begin position="189"/>
        <end position="196"/>
    </location>
</feature>
<feature type="strand" evidence="4">
    <location>
        <begin position="202"/>
        <end position="205"/>
    </location>
</feature>
<feature type="helix" evidence="4">
    <location>
        <begin position="211"/>
        <end position="220"/>
    </location>
</feature>
<feature type="helix" evidence="4">
    <location>
        <begin position="229"/>
        <end position="240"/>
    </location>
</feature>
<feature type="helix" evidence="4">
    <location>
        <begin position="242"/>
        <end position="244"/>
    </location>
</feature>
<feature type="strand" evidence="4">
    <location>
        <begin position="251"/>
        <end position="255"/>
    </location>
</feature>
<feature type="helix" evidence="4">
    <location>
        <begin position="258"/>
        <end position="260"/>
    </location>
</feature>
<feature type="strand" evidence="4">
    <location>
        <begin position="261"/>
        <end position="263"/>
    </location>
</feature>
<feature type="helix" evidence="4">
    <location>
        <begin position="264"/>
        <end position="266"/>
    </location>
</feature>
<feature type="turn" evidence="4">
    <location>
        <begin position="268"/>
        <end position="270"/>
    </location>
</feature>
<organism>
    <name type="scientific">Flavobacterium sp. (strain 141-8)</name>
    <dbReference type="NCBI Taxonomy" id="240"/>
    <lineage>
        <taxon>Bacteria</taxon>
        <taxon>Pseudomonadati</taxon>
        <taxon>Bacteroidota</taxon>
        <taxon>Flavobacteriia</taxon>
        <taxon>Flavobacteriales</taxon>
        <taxon>Flavobacteriaceae</taxon>
        <taxon>Flavobacterium</taxon>
    </lineage>
</organism>
<sequence>MTTAGVSRRPGRLAGKAAIVTGAAGGIGRATVEAYLREGASVVAMDLAPRLAATRYEEPGAIPIACDLADRAAIDAAMADAVARLGGLDILVAGGALKGGTGNFLDLSDADWDRYVDVNMTGTFLTCRAGARAMVAAGAGKDGRSARIITIGSVNSFMAEPEAAAYVAAKGGVAMLTRAMAVDLARHGILVNMIAPGPVDVTGNNTGYSEPRLAEQVLDEVALGRPGLPEEVATAAVFLAEDGSSFITGSTITIDGGLSAMIFGGMREGRR</sequence>
<keyword id="KW-0002">3D-structure</keyword>
<keyword id="KW-0903">Direct protein sequencing</keyword>
<keyword id="KW-0520">NAD</keyword>
<keyword id="KW-0560">Oxidoreductase</keyword>
<reference key="1">
    <citation type="journal article" date="1991" name="Appl. Environ. Microbiol.">
        <title>Cloning, sequencing, and expression of the N-acyl-D-mannosamine dehydrogenase gene from Flavobacterium sp. strain 141-8 in Escherichia coli.</title>
        <authorList>
            <person name="Yamamoto-Otake H."/>
            <person name="Koyama Y."/>
            <person name="Horiuchi T."/>
            <person name="Nakano E."/>
        </authorList>
    </citation>
    <scope>NUCLEOTIDE SEQUENCE [GENOMIC DNA]</scope>
    <scope>PARTIAL PROTEIN SEQUENCE</scope>
</reference>